<name>RS19_MACCJ</name>
<comment type="function">
    <text evidence="1">Protein S19 forms a complex with S13 that binds strongly to the 16S ribosomal RNA.</text>
</comment>
<comment type="similarity">
    <text evidence="1">Belongs to the universal ribosomal protein uS19 family.</text>
</comment>
<accession>B9E9J5</accession>
<keyword id="KW-1185">Reference proteome</keyword>
<keyword id="KW-0687">Ribonucleoprotein</keyword>
<keyword id="KW-0689">Ribosomal protein</keyword>
<keyword id="KW-0694">RNA-binding</keyword>
<keyword id="KW-0699">rRNA-binding</keyword>
<dbReference type="EMBL" id="AP009484">
    <property type="protein sequence ID" value="BAH16906.1"/>
    <property type="molecule type" value="Genomic_DNA"/>
</dbReference>
<dbReference type="RefSeq" id="WP_012656110.1">
    <property type="nucleotide sequence ID" value="NC_011999.1"/>
</dbReference>
<dbReference type="SMR" id="B9E9J5"/>
<dbReference type="STRING" id="458233.MCCL_0199"/>
<dbReference type="GeneID" id="35294474"/>
<dbReference type="GeneID" id="61130621"/>
<dbReference type="KEGG" id="mcl:MCCL_0199"/>
<dbReference type="eggNOG" id="COG0185">
    <property type="taxonomic scope" value="Bacteria"/>
</dbReference>
<dbReference type="HOGENOM" id="CLU_144911_0_1_9"/>
<dbReference type="OrthoDB" id="9797833at2"/>
<dbReference type="Proteomes" id="UP000001383">
    <property type="component" value="Chromosome"/>
</dbReference>
<dbReference type="GO" id="GO:0005737">
    <property type="term" value="C:cytoplasm"/>
    <property type="evidence" value="ECO:0007669"/>
    <property type="project" value="UniProtKB-ARBA"/>
</dbReference>
<dbReference type="GO" id="GO:0015935">
    <property type="term" value="C:small ribosomal subunit"/>
    <property type="evidence" value="ECO:0007669"/>
    <property type="project" value="InterPro"/>
</dbReference>
<dbReference type="GO" id="GO:0019843">
    <property type="term" value="F:rRNA binding"/>
    <property type="evidence" value="ECO:0007669"/>
    <property type="project" value="UniProtKB-UniRule"/>
</dbReference>
<dbReference type="GO" id="GO:0003735">
    <property type="term" value="F:structural constituent of ribosome"/>
    <property type="evidence" value="ECO:0007669"/>
    <property type="project" value="InterPro"/>
</dbReference>
<dbReference type="GO" id="GO:0000028">
    <property type="term" value="P:ribosomal small subunit assembly"/>
    <property type="evidence" value="ECO:0007669"/>
    <property type="project" value="TreeGrafter"/>
</dbReference>
<dbReference type="GO" id="GO:0006412">
    <property type="term" value="P:translation"/>
    <property type="evidence" value="ECO:0007669"/>
    <property type="project" value="UniProtKB-UniRule"/>
</dbReference>
<dbReference type="FunFam" id="3.30.860.10:FF:000001">
    <property type="entry name" value="30S ribosomal protein S19"/>
    <property type="match status" value="1"/>
</dbReference>
<dbReference type="Gene3D" id="3.30.860.10">
    <property type="entry name" value="30s Ribosomal Protein S19, Chain A"/>
    <property type="match status" value="1"/>
</dbReference>
<dbReference type="HAMAP" id="MF_00531">
    <property type="entry name" value="Ribosomal_uS19"/>
    <property type="match status" value="1"/>
</dbReference>
<dbReference type="InterPro" id="IPR002222">
    <property type="entry name" value="Ribosomal_uS19"/>
</dbReference>
<dbReference type="InterPro" id="IPR005732">
    <property type="entry name" value="Ribosomal_uS19_bac-type"/>
</dbReference>
<dbReference type="InterPro" id="IPR020934">
    <property type="entry name" value="Ribosomal_uS19_CS"/>
</dbReference>
<dbReference type="InterPro" id="IPR023575">
    <property type="entry name" value="Ribosomal_uS19_SF"/>
</dbReference>
<dbReference type="NCBIfam" id="TIGR01050">
    <property type="entry name" value="rpsS_bact"/>
    <property type="match status" value="1"/>
</dbReference>
<dbReference type="PANTHER" id="PTHR11880">
    <property type="entry name" value="RIBOSOMAL PROTEIN S19P FAMILY MEMBER"/>
    <property type="match status" value="1"/>
</dbReference>
<dbReference type="PANTHER" id="PTHR11880:SF8">
    <property type="entry name" value="SMALL RIBOSOMAL SUBUNIT PROTEIN US19M"/>
    <property type="match status" value="1"/>
</dbReference>
<dbReference type="Pfam" id="PF00203">
    <property type="entry name" value="Ribosomal_S19"/>
    <property type="match status" value="1"/>
</dbReference>
<dbReference type="PIRSF" id="PIRSF002144">
    <property type="entry name" value="Ribosomal_S19"/>
    <property type="match status" value="1"/>
</dbReference>
<dbReference type="PRINTS" id="PR00975">
    <property type="entry name" value="RIBOSOMALS19"/>
</dbReference>
<dbReference type="SUPFAM" id="SSF54570">
    <property type="entry name" value="Ribosomal protein S19"/>
    <property type="match status" value="1"/>
</dbReference>
<dbReference type="PROSITE" id="PS00323">
    <property type="entry name" value="RIBOSOMAL_S19"/>
    <property type="match status" value="1"/>
</dbReference>
<sequence length="92" mass="10455">MARSLKKGPFIDDHLMKKVEALEEGGKKTVIKTWSRRSTIFPNFIGHTIAVYDGRKHVPVYVTEDMVGHKLGEFAPTRTYKGHGADDKKTKR</sequence>
<organism>
    <name type="scientific">Macrococcus caseolyticus (strain JCSC5402)</name>
    <name type="common">Macrococcoides caseolyticum</name>
    <dbReference type="NCBI Taxonomy" id="458233"/>
    <lineage>
        <taxon>Bacteria</taxon>
        <taxon>Bacillati</taxon>
        <taxon>Bacillota</taxon>
        <taxon>Bacilli</taxon>
        <taxon>Bacillales</taxon>
        <taxon>Staphylococcaceae</taxon>
        <taxon>Macrococcoides</taxon>
    </lineage>
</organism>
<feature type="chain" id="PRO_1000146398" description="Small ribosomal subunit protein uS19">
    <location>
        <begin position="1"/>
        <end position="92"/>
    </location>
</feature>
<reference key="1">
    <citation type="journal article" date="2009" name="J. Bacteriol.">
        <title>Complete genome sequence of Macrococcus caseolyticus strain JCSCS5402, reflecting the ancestral genome of the human-pathogenic staphylococci.</title>
        <authorList>
            <person name="Baba T."/>
            <person name="Kuwahara-Arai K."/>
            <person name="Uchiyama I."/>
            <person name="Takeuchi F."/>
            <person name="Ito T."/>
            <person name="Hiramatsu K."/>
        </authorList>
    </citation>
    <scope>NUCLEOTIDE SEQUENCE [LARGE SCALE GENOMIC DNA]</scope>
    <source>
        <strain>JCSC5402</strain>
    </source>
</reference>
<protein>
    <recommendedName>
        <fullName evidence="1">Small ribosomal subunit protein uS19</fullName>
    </recommendedName>
    <alternativeName>
        <fullName evidence="2">30S ribosomal protein S19</fullName>
    </alternativeName>
</protein>
<evidence type="ECO:0000255" key="1">
    <source>
        <dbReference type="HAMAP-Rule" id="MF_00531"/>
    </source>
</evidence>
<evidence type="ECO:0000305" key="2"/>
<gene>
    <name evidence="1" type="primary">rpsS</name>
    <name type="ordered locus">MCCL_0199</name>
</gene>
<proteinExistence type="inferred from homology"/>